<feature type="chain" id="PRO_0000217147" description="UPF0314 protein R03235">
    <location>
        <begin position="1"/>
        <end position="197"/>
    </location>
</feature>
<feature type="transmembrane region" description="Helical" evidence="1">
    <location>
        <begin position="16"/>
        <end position="36"/>
    </location>
</feature>
<feature type="transmembrane region" description="Helical" evidence="1">
    <location>
        <begin position="152"/>
        <end position="172"/>
    </location>
</feature>
<keyword id="KW-1003">Cell membrane</keyword>
<keyword id="KW-0472">Membrane</keyword>
<keyword id="KW-1185">Reference proteome</keyword>
<keyword id="KW-0812">Transmembrane</keyword>
<keyword id="KW-1133">Transmembrane helix</keyword>
<proteinExistence type="inferred from homology"/>
<gene>
    <name type="ordered locus">R03235</name>
    <name type="ORF">SMc03852</name>
</gene>
<protein>
    <recommendedName>
        <fullName>UPF0314 protein R03235</fullName>
    </recommendedName>
</protein>
<name>Y3235_RHIME</name>
<organism>
    <name type="scientific">Rhizobium meliloti (strain 1021)</name>
    <name type="common">Ensifer meliloti</name>
    <name type="synonym">Sinorhizobium meliloti</name>
    <dbReference type="NCBI Taxonomy" id="266834"/>
    <lineage>
        <taxon>Bacteria</taxon>
        <taxon>Pseudomonadati</taxon>
        <taxon>Pseudomonadota</taxon>
        <taxon>Alphaproteobacteria</taxon>
        <taxon>Hyphomicrobiales</taxon>
        <taxon>Rhizobiaceae</taxon>
        <taxon>Sinorhizobium/Ensifer group</taxon>
        <taxon>Sinorhizobium</taxon>
    </lineage>
</organism>
<reference key="1">
    <citation type="journal article" date="2001" name="Proc. Natl. Acad. Sci. U.S.A.">
        <title>Analysis of the chromosome sequence of the legume symbiont Sinorhizobium meliloti strain 1021.</title>
        <authorList>
            <person name="Capela D."/>
            <person name="Barloy-Hubler F."/>
            <person name="Gouzy J."/>
            <person name="Bothe G."/>
            <person name="Ampe F."/>
            <person name="Batut J."/>
            <person name="Boistard P."/>
            <person name="Becker A."/>
            <person name="Boutry M."/>
            <person name="Cadieu E."/>
            <person name="Dreano S."/>
            <person name="Gloux S."/>
            <person name="Godrie T."/>
            <person name="Goffeau A."/>
            <person name="Kahn D."/>
            <person name="Kiss E."/>
            <person name="Lelaure V."/>
            <person name="Masuy D."/>
            <person name="Pohl T."/>
            <person name="Portetelle D."/>
            <person name="Puehler A."/>
            <person name="Purnelle B."/>
            <person name="Ramsperger U."/>
            <person name="Renard C."/>
            <person name="Thebault P."/>
            <person name="Vandenbol M."/>
            <person name="Weidner S."/>
            <person name="Galibert F."/>
        </authorList>
    </citation>
    <scope>NUCLEOTIDE SEQUENCE [LARGE SCALE GENOMIC DNA]</scope>
    <source>
        <strain>1021</strain>
    </source>
</reference>
<reference key="2">
    <citation type="journal article" date="2001" name="Science">
        <title>The composite genome of the legume symbiont Sinorhizobium meliloti.</title>
        <authorList>
            <person name="Galibert F."/>
            <person name="Finan T.M."/>
            <person name="Long S.R."/>
            <person name="Puehler A."/>
            <person name="Abola P."/>
            <person name="Ampe F."/>
            <person name="Barloy-Hubler F."/>
            <person name="Barnett M.J."/>
            <person name="Becker A."/>
            <person name="Boistard P."/>
            <person name="Bothe G."/>
            <person name="Boutry M."/>
            <person name="Bowser L."/>
            <person name="Buhrmester J."/>
            <person name="Cadieu E."/>
            <person name="Capela D."/>
            <person name="Chain P."/>
            <person name="Cowie A."/>
            <person name="Davis R.W."/>
            <person name="Dreano S."/>
            <person name="Federspiel N.A."/>
            <person name="Fisher R.F."/>
            <person name="Gloux S."/>
            <person name="Godrie T."/>
            <person name="Goffeau A."/>
            <person name="Golding B."/>
            <person name="Gouzy J."/>
            <person name="Gurjal M."/>
            <person name="Hernandez-Lucas I."/>
            <person name="Hong A."/>
            <person name="Huizar L."/>
            <person name="Hyman R.W."/>
            <person name="Jones T."/>
            <person name="Kahn D."/>
            <person name="Kahn M.L."/>
            <person name="Kalman S."/>
            <person name="Keating D.H."/>
            <person name="Kiss E."/>
            <person name="Komp C."/>
            <person name="Lelaure V."/>
            <person name="Masuy D."/>
            <person name="Palm C."/>
            <person name="Peck M.C."/>
            <person name="Pohl T.M."/>
            <person name="Portetelle D."/>
            <person name="Purnelle B."/>
            <person name="Ramsperger U."/>
            <person name="Surzycki R."/>
            <person name="Thebault P."/>
            <person name="Vandenbol M."/>
            <person name="Vorhoelter F.J."/>
            <person name="Weidner S."/>
            <person name="Wells D.H."/>
            <person name="Wong K."/>
            <person name="Yeh K.-C."/>
            <person name="Batut J."/>
        </authorList>
    </citation>
    <scope>NUCLEOTIDE SEQUENCE [LARGE SCALE GENOMIC DNA]</scope>
    <source>
        <strain>1021</strain>
    </source>
</reference>
<accession>Q92L50</accession>
<comment type="subcellular location">
    <subcellularLocation>
        <location evidence="2">Cell membrane</location>
        <topology evidence="2">Multi-pass membrane protein</topology>
    </subcellularLocation>
</comment>
<comment type="similarity">
    <text evidence="2">Belongs to the UPF0314 family.</text>
</comment>
<dbReference type="EMBL" id="AL591688">
    <property type="protein sequence ID" value="CAC47814.1"/>
    <property type="molecule type" value="Genomic_DNA"/>
</dbReference>
<dbReference type="RefSeq" id="NP_387341.1">
    <property type="nucleotide sequence ID" value="NC_003047.1"/>
</dbReference>
<dbReference type="RefSeq" id="WP_003529722.1">
    <property type="nucleotide sequence ID" value="NC_003047.1"/>
</dbReference>
<dbReference type="EnsemblBacteria" id="CAC47814">
    <property type="protein sequence ID" value="CAC47814"/>
    <property type="gene ID" value="SMc03852"/>
</dbReference>
<dbReference type="KEGG" id="sme:SMc03852"/>
<dbReference type="PATRIC" id="fig|266834.11.peg.4788"/>
<dbReference type="eggNOG" id="ENOG502ZZUX">
    <property type="taxonomic scope" value="Bacteria"/>
</dbReference>
<dbReference type="HOGENOM" id="CLU_1395337_0_0_5"/>
<dbReference type="OrthoDB" id="9811954at2"/>
<dbReference type="Proteomes" id="UP000001976">
    <property type="component" value="Chromosome"/>
</dbReference>
<dbReference type="GO" id="GO:0005886">
    <property type="term" value="C:plasma membrane"/>
    <property type="evidence" value="ECO:0007669"/>
    <property type="project" value="UniProtKB-SubCell"/>
</dbReference>
<dbReference type="HAMAP" id="MF_01514">
    <property type="entry name" value="UPF0314"/>
    <property type="match status" value="1"/>
</dbReference>
<dbReference type="InterPro" id="IPR019691">
    <property type="entry name" value="DUF2585"/>
</dbReference>
<dbReference type="NCBIfam" id="NF002099">
    <property type="entry name" value="PRK00944.1"/>
    <property type="match status" value="1"/>
</dbReference>
<dbReference type="Pfam" id="PF10755">
    <property type="entry name" value="DUF2585"/>
    <property type="match status" value="1"/>
</dbReference>
<sequence>MTIAAGSQDDKQRRAALWLLACLGVLAIQVLVQHLMGRLWICECGYIKLWEGVVKSSGNSQHLSDWYTPSHVIHGFLFYGLGHLLMRGKPWSARLLLATVIESAWEIAENTPMVINRYRAATISLDYFGDSILNSAMDTLAMAVGFLIASRLPVAATVAIAIVLELFTGYMVRDNLTLNVLMLVWPLDAVKAWQAGV</sequence>
<evidence type="ECO:0000255" key="1"/>
<evidence type="ECO:0000305" key="2"/>